<keyword id="KW-0004">4Fe-4S</keyword>
<keyword id="KW-0408">Iron</keyword>
<keyword id="KW-0411">Iron-sulfur</keyword>
<keyword id="KW-0414">Isoprene biosynthesis</keyword>
<keyword id="KW-0479">Metal-binding</keyword>
<keyword id="KW-0560">Oxidoreductase</keyword>
<reference key="1">
    <citation type="journal article" date="2008" name="J. Bacteriol.">
        <title>The pangenome structure of Escherichia coli: comparative genomic analysis of E. coli commensal and pathogenic isolates.</title>
        <authorList>
            <person name="Rasko D.A."/>
            <person name="Rosovitz M.J."/>
            <person name="Myers G.S.A."/>
            <person name="Mongodin E.F."/>
            <person name="Fricke W.F."/>
            <person name="Gajer P."/>
            <person name="Crabtree J."/>
            <person name="Sebaihia M."/>
            <person name="Thomson N.R."/>
            <person name="Chaudhuri R."/>
            <person name="Henderson I.R."/>
            <person name="Sperandio V."/>
            <person name="Ravel J."/>
        </authorList>
    </citation>
    <scope>NUCLEOTIDE SEQUENCE [LARGE SCALE GENOMIC DNA]</scope>
    <source>
        <strain>HS</strain>
    </source>
</reference>
<dbReference type="EC" id="1.17.7.3" evidence="1"/>
<dbReference type="EMBL" id="CP000802">
    <property type="protein sequence ID" value="ABV06925.1"/>
    <property type="molecule type" value="Genomic_DNA"/>
</dbReference>
<dbReference type="RefSeq" id="WP_000551818.1">
    <property type="nucleotide sequence ID" value="NC_009800.1"/>
</dbReference>
<dbReference type="SMR" id="A8A321"/>
<dbReference type="GeneID" id="93774621"/>
<dbReference type="KEGG" id="ecx:EcHS_A2666"/>
<dbReference type="HOGENOM" id="CLU_042258_0_0_6"/>
<dbReference type="UniPathway" id="UPA00056">
    <property type="reaction ID" value="UER00096"/>
</dbReference>
<dbReference type="GO" id="GO:0051539">
    <property type="term" value="F:4 iron, 4 sulfur cluster binding"/>
    <property type="evidence" value="ECO:0007669"/>
    <property type="project" value="UniProtKB-UniRule"/>
</dbReference>
<dbReference type="GO" id="GO:0046429">
    <property type="term" value="F:4-hydroxy-3-methylbut-2-en-1-yl diphosphate synthase activity (ferredoxin)"/>
    <property type="evidence" value="ECO:0007669"/>
    <property type="project" value="UniProtKB-UniRule"/>
</dbReference>
<dbReference type="GO" id="GO:0141197">
    <property type="term" value="F:4-hydroxy-3-methylbut-2-enyl-diphosphate synthase activity (flavodoxin)"/>
    <property type="evidence" value="ECO:0007669"/>
    <property type="project" value="UniProtKB-EC"/>
</dbReference>
<dbReference type="GO" id="GO:0005506">
    <property type="term" value="F:iron ion binding"/>
    <property type="evidence" value="ECO:0007669"/>
    <property type="project" value="InterPro"/>
</dbReference>
<dbReference type="GO" id="GO:0019288">
    <property type="term" value="P:isopentenyl diphosphate biosynthetic process, methylerythritol 4-phosphate pathway"/>
    <property type="evidence" value="ECO:0007669"/>
    <property type="project" value="UniProtKB-UniRule"/>
</dbReference>
<dbReference type="GO" id="GO:0016114">
    <property type="term" value="P:terpenoid biosynthetic process"/>
    <property type="evidence" value="ECO:0007669"/>
    <property type="project" value="InterPro"/>
</dbReference>
<dbReference type="FunFam" id="3.20.20.20:FF:000001">
    <property type="entry name" value="4-hydroxy-3-methylbut-2-en-1-yl diphosphate synthase (flavodoxin)"/>
    <property type="match status" value="1"/>
</dbReference>
<dbReference type="FunFam" id="3.30.413.10:FF:000002">
    <property type="entry name" value="4-hydroxy-3-methylbut-2-en-1-yl diphosphate synthase (flavodoxin)"/>
    <property type="match status" value="1"/>
</dbReference>
<dbReference type="Gene3D" id="3.20.20.20">
    <property type="entry name" value="Dihydropteroate synthase-like"/>
    <property type="match status" value="1"/>
</dbReference>
<dbReference type="Gene3D" id="3.30.413.10">
    <property type="entry name" value="Sulfite Reductase Hemoprotein, domain 1"/>
    <property type="match status" value="1"/>
</dbReference>
<dbReference type="HAMAP" id="MF_00159">
    <property type="entry name" value="IspG"/>
    <property type="match status" value="1"/>
</dbReference>
<dbReference type="InterPro" id="IPR011005">
    <property type="entry name" value="Dihydropteroate_synth-like_sf"/>
</dbReference>
<dbReference type="InterPro" id="IPR016425">
    <property type="entry name" value="IspG_bac"/>
</dbReference>
<dbReference type="InterPro" id="IPR004588">
    <property type="entry name" value="IspG_bac-typ"/>
</dbReference>
<dbReference type="InterPro" id="IPR045854">
    <property type="entry name" value="NO2/SO3_Rdtase_4Fe4S_sf"/>
</dbReference>
<dbReference type="NCBIfam" id="TIGR00612">
    <property type="entry name" value="ispG_gcpE"/>
    <property type="match status" value="1"/>
</dbReference>
<dbReference type="NCBIfam" id="NF001540">
    <property type="entry name" value="PRK00366.1"/>
    <property type="match status" value="1"/>
</dbReference>
<dbReference type="PANTHER" id="PTHR30454">
    <property type="entry name" value="4-HYDROXY-3-METHYLBUT-2-EN-1-YL DIPHOSPHATE SYNTHASE"/>
    <property type="match status" value="1"/>
</dbReference>
<dbReference type="PANTHER" id="PTHR30454:SF0">
    <property type="entry name" value="4-HYDROXY-3-METHYLBUT-2-EN-1-YL DIPHOSPHATE SYNTHASE (FERREDOXIN), CHLOROPLASTIC"/>
    <property type="match status" value="1"/>
</dbReference>
<dbReference type="Pfam" id="PF04551">
    <property type="entry name" value="GcpE"/>
    <property type="match status" value="1"/>
</dbReference>
<dbReference type="PIRSF" id="PIRSF004640">
    <property type="entry name" value="IspG"/>
    <property type="match status" value="1"/>
</dbReference>
<dbReference type="SUPFAM" id="SSF51717">
    <property type="entry name" value="Dihydropteroate synthetase-like"/>
    <property type="match status" value="1"/>
</dbReference>
<dbReference type="SUPFAM" id="SSF56014">
    <property type="entry name" value="Nitrite and sulphite reductase 4Fe-4S domain-like"/>
    <property type="match status" value="1"/>
</dbReference>
<comment type="function">
    <text evidence="1">Converts 2C-methyl-D-erythritol 2,4-cyclodiphosphate (ME-2,4cPP) into 1-hydroxy-2-methyl-2-(E)-butenyl 4-diphosphate.</text>
</comment>
<comment type="catalytic activity">
    <reaction evidence="1">
        <text>(2E)-4-hydroxy-3-methylbut-2-enyl diphosphate + oxidized [flavodoxin] + H2O + 2 H(+) = 2-C-methyl-D-erythritol 2,4-cyclic diphosphate + reduced [flavodoxin]</text>
        <dbReference type="Rhea" id="RHEA:43604"/>
        <dbReference type="Rhea" id="RHEA-COMP:10622"/>
        <dbReference type="Rhea" id="RHEA-COMP:10623"/>
        <dbReference type="ChEBI" id="CHEBI:15377"/>
        <dbReference type="ChEBI" id="CHEBI:15378"/>
        <dbReference type="ChEBI" id="CHEBI:57618"/>
        <dbReference type="ChEBI" id="CHEBI:58210"/>
        <dbReference type="ChEBI" id="CHEBI:58483"/>
        <dbReference type="ChEBI" id="CHEBI:128753"/>
        <dbReference type="EC" id="1.17.7.3"/>
    </reaction>
</comment>
<comment type="cofactor">
    <cofactor evidence="1">
        <name>[4Fe-4S] cluster</name>
        <dbReference type="ChEBI" id="CHEBI:49883"/>
    </cofactor>
    <text evidence="1">Binds 1 [4Fe-4S] cluster.</text>
</comment>
<comment type="pathway">
    <text evidence="1">Isoprenoid biosynthesis; isopentenyl diphosphate biosynthesis via DXP pathway; isopentenyl diphosphate from 1-deoxy-D-xylulose 5-phosphate: step 5/6.</text>
</comment>
<comment type="similarity">
    <text evidence="1">Belongs to the IspG family.</text>
</comment>
<name>ISPG_ECOHS</name>
<feature type="chain" id="PRO_1000058195" description="4-hydroxy-3-methylbut-2-en-1-yl diphosphate synthase (flavodoxin)">
    <location>
        <begin position="1"/>
        <end position="372"/>
    </location>
</feature>
<feature type="binding site" evidence="1">
    <location>
        <position position="270"/>
    </location>
    <ligand>
        <name>[4Fe-4S] cluster</name>
        <dbReference type="ChEBI" id="CHEBI:49883"/>
    </ligand>
</feature>
<feature type="binding site" evidence="1">
    <location>
        <position position="273"/>
    </location>
    <ligand>
        <name>[4Fe-4S] cluster</name>
        <dbReference type="ChEBI" id="CHEBI:49883"/>
    </ligand>
</feature>
<feature type="binding site" evidence="1">
    <location>
        <position position="305"/>
    </location>
    <ligand>
        <name>[4Fe-4S] cluster</name>
        <dbReference type="ChEBI" id="CHEBI:49883"/>
    </ligand>
</feature>
<feature type="binding site" evidence="1">
    <location>
        <position position="312"/>
    </location>
    <ligand>
        <name>[4Fe-4S] cluster</name>
        <dbReference type="ChEBI" id="CHEBI:49883"/>
    </ligand>
</feature>
<proteinExistence type="inferred from homology"/>
<protein>
    <recommendedName>
        <fullName evidence="1">4-hydroxy-3-methylbut-2-en-1-yl diphosphate synthase (flavodoxin)</fullName>
        <ecNumber evidence="1">1.17.7.3</ecNumber>
    </recommendedName>
    <alternativeName>
        <fullName evidence="1">1-hydroxy-2-methyl-2-(E)-butenyl 4-diphosphate synthase</fullName>
    </alternativeName>
</protein>
<evidence type="ECO:0000255" key="1">
    <source>
        <dbReference type="HAMAP-Rule" id="MF_00159"/>
    </source>
</evidence>
<sequence length="372" mass="40712">MHNQAPIQRRKSTRIYVGNVPIGDGAPIAVQSMTNTRTTDVEATVNQIKALERVGADIVRVSVPTMDAAEAFKLIKQRVNVPLVADIHFDYRIALKVAEYGVDCLRINPGNIGNEERIRMVVDCARDKNIPIRIGVNAGSLEKDLQEKYGEPTPQALLESAMRHVDHLDRLNFDQFKVSVKASDVFLAVESYRLLAKQIDQPLHLGITEAGGARSGAVKSAIGLGLLLSEGIGDTLRVSLAADPVEEIKVGFDILKSLRIRSRGINFIACPTCSRQEFDVIGTVNALEQRLEDIITPMDVSIIGCVVNGPGEALVSTLGVTGGNKKSGLYEDGVRKDRLDNNDMIDQLEARIRAKASQLDEARRIDVQQVEK</sequence>
<organism>
    <name type="scientific">Escherichia coli O9:H4 (strain HS)</name>
    <dbReference type="NCBI Taxonomy" id="331112"/>
    <lineage>
        <taxon>Bacteria</taxon>
        <taxon>Pseudomonadati</taxon>
        <taxon>Pseudomonadota</taxon>
        <taxon>Gammaproteobacteria</taxon>
        <taxon>Enterobacterales</taxon>
        <taxon>Enterobacteriaceae</taxon>
        <taxon>Escherichia</taxon>
    </lineage>
</organism>
<accession>A8A321</accession>
<gene>
    <name evidence="1" type="primary">ispG</name>
    <name type="ordered locus">EcHS_A2666</name>
</gene>